<comment type="function">
    <text>May play a role in signal transduction of hyperosmotic response.</text>
</comment>
<comment type="catalytic activity">
    <reaction>
        <text>L-seryl-[protein] + ATP = O-phospho-L-seryl-[protein] + ADP + H(+)</text>
        <dbReference type="Rhea" id="RHEA:17989"/>
        <dbReference type="Rhea" id="RHEA-COMP:9863"/>
        <dbReference type="Rhea" id="RHEA-COMP:11604"/>
        <dbReference type="ChEBI" id="CHEBI:15378"/>
        <dbReference type="ChEBI" id="CHEBI:29999"/>
        <dbReference type="ChEBI" id="CHEBI:30616"/>
        <dbReference type="ChEBI" id="CHEBI:83421"/>
        <dbReference type="ChEBI" id="CHEBI:456216"/>
        <dbReference type="EC" id="2.7.11.1"/>
    </reaction>
</comment>
<comment type="catalytic activity">
    <reaction>
        <text>L-threonyl-[protein] + ATP = O-phospho-L-threonyl-[protein] + ADP + H(+)</text>
        <dbReference type="Rhea" id="RHEA:46608"/>
        <dbReference type="Rhea" id="RHEA-COMP:11060"/>
        <dbReference type="Rhea" id="RHEA-COMP:11605"/>
        <dbReference type="ChEBI" id="CHEBI:15378"/>
        <dbReference type="ChEBI" id="CHEBI:30013"/>
        <dbReference type="ChEBI" id="CHEBI:30616"/>
        <dbReference type="ChEBI" id="CHEBI:61977"/>
        <dbReference type="ChEBI" id="CHEBI:456216"/>
        <dbReference type="EC" id="2.7.11.1"/>
    </reaction>
</comment>
<comment type="activity regulation">
    <text evidence="3">Activated by phosphorylation in response to hyperosmotic stress within 5 minutes.</text>
</comment>
<comment type="tissue specificity">
    <text evidence="3">Expressed in leaf blades, leaf sheaths and roots. Expressed in shoots and roots of young seedlings.</text>
</comment>
<comment type="induction">
    <text evidence="3">By hyperosmotic stress in leaf blades, leaf sheaths and roots. Induced at lower level by abscisic acid (ABA).</text>
</comment>
<comment type="domain">
    <text evidence="3">The C-terminal region is necessary for the kinase activation in response to hyperosmotic stress.</text>
</comment>
<comment type="PTM">
    <text evidence="3">Phosphorylated.</text>
</comment>
<comment type="similarity">
    <text evidence="1">Belongs to the protein kinase superfamily. Ser/Thr protein kinase family.</text>
</comment>
<evidence type="ECO:0000255" key="1">
    <source>
        <dbReference type="PROSITE-ProRule" id="PRU00159"/>
    </source>
</evidence>
<evidence type="ECO:0000255" key="2">
    <source>
        <dbReference type="PROSITE-ProRule" id="PRU10027"/>
    </source>
</evidence>
<evidence type="ECO:0000269" key="3">
    <source>
    </source>
</evidence>
<evidence type="ECO:0000303" key="4">
    <source ref="2"/>
</evidence>
<evidence type="ECO:0000312" key="5">
    <source>
        <dbReference type="EMBL" id="EEE59181.1"/>
    </source>
</evidence>
<accession>Q75LR7</accession>
<accession>Q10KB6</accession>
<reference key="1">
    <citation type="journal article" date="2004" name="Plant Cell">
        <title>Differential activation of the rice sucrose nonfermenting1-related protein kinase2 family by hyperosmotic stress and abscisic acid.</title>
        <authorList>
            <person name="Kobayashi Y."/>
            <person name="Yamamoto S."/>
            <person name="Minami H."/>
            <person name="Kagaya Y."/>
            <person name="Hattori T."/>
        </authorList>
    </citation>
    <scope>NUCLEOTIDE SEQUENCE [MRNA]</scope>
    <scope>ACTIVITY REGULATION</scope>
    <scope>PHOSPHORYLATION</scope>
    <scope>TISSUE SPECIFICITY</scope>
    <scope>INDUCTION</scope>
    <scope>DOMAIN</scope>
    <scope>NOMENCLATURE</scope>
    <scope>MUTAGENESIS OF SER-158; THR-159 AND THR-162</scope>
    <source>
        <strain>cv. Nipponbare</strain>
    </source>
</reference>
<reference key="2">
    <citation type="journal article" date="2013" name="Plant Mol. Biol. Rep.">
        <title>Genome-wide phylogenetic analysis of stress-activated protein kinase genes in rice (OsSAPKs) and expression profiling in response to Xanthomonas oryzae pv. oryzicola infection.</title>
        <authorList>
            <person name="Xu M.-R."/>
            <person name="Huang L.-Y."/>
            <person name="Zhang F."/>
            <person name="Zhu L.-H."/>
            <person name="Zhou Y.-L."/>
            <person name="Li Z.-K."/>
        </authorList>
    </citation>
    <scope>NUCLEOTIDE SEQUENCE [MRNA]</scope>
</reference>
<reference key="3">
    <citation type="journal article" date="2005" name="Genome Res.">
        <title>Sequence, annotation, and analysis of synteny between rice chromosome 3 and diverged grass species.</title>
        <authorList>
            <consortium name="The rice chromosome 3 sequencing consortium"/>
            <person name="Buell C.R."/>
            <person name="Yuan Q."/>
            <person name="Ouyang S."/>
            <person name="Liu J."/>
            <person name="Zhu W."/>
            <person name="Wang A."/>
            <person name="Maiti R."/>
            <person name="Haas B."/>
            <person name="Wortman J."/>
            <person name="Pertea M."/>
            <person name="Jones K.M."/>
            <person name="Kim M."/>
            <person name="Overton L."/>
            <person name="Tsitrin T."/>
            <person name="Fadrosh D."/>
            <person name="Bera J."/>
            <person name="Weaver B."/>
            <person name="Jin S."/>
            <person name="Johri S."/>
            <person name="Reardon M."/>
            <person name="Webb K."/>
            <person name="Hill J."/>
            <person name="Moffat K."/>
            <person name="Tallon L."/>
            <person name="Van Aken S."/>
            <person name="Lewis M."/>
            <person name="Utterback T."/>
            <person name="Feldblyum T."/>
            <person name="Zismann V."/>
            <person name="Iobst S."/>
            <person name="Hsiao J."/>
            <person name="de Vazeille A.R."/>
            <person name="Salzberg S.L."/>
            <person name="White O."/>
            <person name="Fraser C.M."/>
            <person name="Yu Y."/>
            <person name="Kim H."/>
            <person name="Rambo T."/>
            <person name="Currie J."/>
            <person name="Collura K."/>
            <person name="Kernodle-Thompson S."/>
            <person name="Wei F."/>
            <person name="Kudrna K."/>
            <person name="Ammiraju J.S.S."/>
            <person name="Luo M."/>
            <person name="Goicoechea J.L."/>
            <person name="Wing R.A."/>
            <person name="Henry D."/>
            <person name="Oates R."/>
            <person name="Palmer M."/>
            <person name="Pries G."/>
            <person name="Saski C."/>
            <person name="Simmons J."/>
            <person name="Soderlund C."/>
            <person name="Nelson W."/>
            <person name="de la Bastide M."/>
            <person name="Spiegel L."/>
            <person name="Nascimento L."/>
            <person name="Huang E."/>
            <person name="Preston R."/>
            <person name="Zutavern T."/>
            <person name="Palmer L."/>
            <person name="O'Shaughnessy A."/>
            <person name="Dike S."/>
            <person name="McCombie W.R."/>
            <person name="Minx P."/>
            <person name="Cordum H."/>
            <person name="Wilson R."/>
            <person name="Jin W."/>
            <person name="Lee H.R."/>
            <person name="Jiang J."/>
            <person name="Jackson S."/>
        </authorList>
    </citation>
    <scope>NUCLEOTIDE SEQUENCE [LARGE SCALE GENOMIC DNA]</scope>
    <source>
        <strain>cv. Nipponbare</strain>
    </source>
</reference>
<reference key="4">
    <citation type="journal article" date="2005" name="Nature">
        <title>The map-based sequence of the rice genome.</title>
        <authorList>
            <consortium name="International rice genome sequencing project (IRGSP)"/>
        </authorList>
    </citation>
    <scope>NUCLEOTIDE SEQUENCE [LARGE SCALE GENOMIC DNA]</scope>
    <source>
        <strain>cv. Nipponbare</strain>
    </source>
</reference>
<reference key="5">
    <citation type="journal article" date="2008" name="Nucleic Acids Res.">
        <title>The rice annotation project database (RAP-DB): 2008 update.</title>
        <authorList>
            <consortium name="The rice annotation project (RAP)"/>
        </authorList>
    </citation>
    <scope>GENOME REANNOTATION</scope>
    <source>
        <strain>cv. Nipponbare</strain>
    </source>
</reference>
<reference key="6">
    <citation type="journal article" date="2013" name="Rice">
        <title>Improvement of the Oryza sativa Nipponbare reference genome using next generation sequence and optical map data.</title>
        <authorList>
            <person name="Kawahara Y."/>
            <person name="de la Bastide M."/>
            <person name="Hamilton J.P."/>
            <person name="Kanamori H."/>
            <person name="McCombie W.R."/>
            <person name="Ouyang S."/>
            <person name="Schwartz D.C."/>
            <person name="Tanaka T."/>
            <person name="Wu J."/>
            <person name="Zhou S."/>
            <person name="Childs K.L."/>
            <person name="Davidson R.M."/>
            <person name="Lin H."/>
            <person name="Quesada-Ocampo L."/>
            <person name="Vaillancourt B."/>
            <person name="Sakai H."/>
            <person name="Lee S.S."/>
            <person name="Kim J."/>
            <person name="Numa H."/>
            <person name="Itoh T."/>
            <person name="Buell C.R."/>
            <person name="Matsumoto T."/>
        </authorList>
    </citation>
    <scope>GENOME REANNOTATION</scope>
    <source>
        <strain>cv. Nipponbare</strain>
    </source>
</reference>
<reference key="7">
    <citation type="journal article" date="2005" name="PLoS Biol.">
        <title>The genomes of Oryza sativa: a history of duplications.</title>
        <authorList>
            <person name="Yu J."/>
            <person name="Wang J."/>
            <person name="Lin W."/>
            <person name="Li S."/>
            <person name="Li H."/>
            <person name="Zhou J."/>
            <person name="Ni P."/>
            <person name="Dong W."/>
            <person name="Hu S."/>
            <person name="Zeng C."/>
            <person name="Zhang J."/>
            <person name="Zhang Y."/>
            <person name="Li R."/>
            <person name="Xu Z."/>
            <person name="Li S."/>
            <person name="Li X."/>
            <person name="Zheng H."/>
            <person name="Cong L."/>
            <person name="Lin L."/>
            <person name="Yin J."/>
            <person name="Geng J."/>
            <person name="Li G."/>
            <person name="Shi J."/>
            <person name="Liu J."/>
            <person name="Lv H."/>
            <person name="Li J."/>
            <person name="Wang J."/>
            <person name="Deng Y."/>
            <person name="Ran L."/>
            <person name="Shi X."/>
            <person name="Wang X."/>
            <person name="Wu Q."/>
            <person name="Li C."/>
            <person name="Ren X."/>
            <person name="Wang J."/>
            <person name="Wang X."/>
            <person name="Li D."/>
            <person name="Liu D."/>
            <person name="Zhang X."/>
            <person name="Ji Z."/>
            <person name="Zhao W."/>
            <person name="Sun Y."/>
            <person name="Zhang Z."/>
            <person name="Bao J."/>
            <person name="Han Y."/>
            <person name="Dong L."/>
            <person name="Ji J."/>
            <person name="Chen P."/>
            <person name="Wu S."/>
            <person name="Liu J."/>
            <person name="Xiao Y."/>
            <person name="Bu D."/>
            <person name="Tan J."/>
            <person name="Yang L."/>
            <person name="Ye C."/>
            <person name="Zhang J."/>
            <person name="Xu J."/>
            <person name="Zhou Y."/>
            <person name="Yu Y."/>
            <person name="Zhang B."/>
            <person name="Zhuang S."/>
            <person name="Wei H."/>
            <person name="Liu B."/>
            <person name="Lei M."/>
            <person name="Yu H."/>
            <person name="Li Y."/>
            <person name="Xu H."/>
            <person name="Wei S."/>
            <person name="He X."/>
            <person name="Fang L."/>
            <person name="Zhang Z."/>
            <person name="Zhang Y."/>
            <person name="Huang X."/>
            <person name="Su Z."/>
            <person name="Tong W."/>
            <person name="Li J."/>
            <person name="Tong Z."/>
            <person name="Li S."/>
            <person name="Ye J."/>
            <person name="Wang L."/>
            <person name="Fang L."/>
            <person name="Lei T."/>
            <person name="Chen C.-S."/>
            <person name="Chen H.-C."/>
            <person name="Xu Z."/>
            <person name="Li H."/>
            <person name="Huang H."/>
            <person name="Zhang F."/>
            <person name="Xu H."/>
            <person name="Li N."/>
            <person name="Zhao C."/>
            <person name="Li S."/>
            <person name="Dong L."/>
            <person name="Huang Y."/>
            <person name="Li L."/>
            <person name="Xi Y."/>
            <person name="Qi Q."/>
            <person name="Li W."/>
            <person name="Zhang B."/>
            <person name="Hu W."/>
            <person name="Zhang Y."/>
            <person name="Tian X."/>
            <person name="Jiao Y."/>
            <person name="Liang X."/>
            <person name="Jin J."/>
            <person name="Gao L."/>
            <person name="Zheng W."/>
            <person name="Hao B."/>
            <person name="Liu S.-M."/>
            <person name="Wang W."/>
            <person name="Yuan L."/>
            <person name="Cao M."/>
            <person name="McDermott J."/>
            <person name="Samudrala R."/>
            <person name="Wang J."/>
            <person name="Wong G.K.-S."/>
            <person name="Yang H."/>
        </authorList>
    </citation>
    <scope>NUCLEOTIDE SEQUENCE [LARGE SCALE GENOMIC DNA]</scope>
    <source>
        <strain>cv. Nipponbare</strain>
    </source>
</reference>
<reference key="8">
    <citation type="journal article" date="2003" name="Science">
        <title>Collection, mapping, and annotation of over 28,000 cDNA clones from japonica rice.</title>
        <authorList>
            <consortium name="The rice full-length cDNA consortium"/>
        </authorList>
    </citation>
    <scope>NUCLEOTIDE SEQUENCE [LARGE SCALE MRNA]</scope>
    <source>
        <strain>cv. Nipponbare</strain>
    </source>
</reference>
<name>SAPK1_ORYSJ</name>
<dbReference type="EC" id="2.7.11.1"/>
<dbReference type="EMBL" id="AB125302">
    <property type="protein sequence ID" value="BAD17997.1"/>
    <property type="molecule type" value="mRNA"/>
</dbReference>
<dbReference type="EMBL" id="JF733759">
    <property type="protein sequence ID" value="AEF00930.1"/>
    <property type="molecule type" value="mRNA"/>
</dbReference>
<dbReference type="EMBL" id="AC092075">
    <property type="protein sequence ID" value="AAR06370.1"/>
    <property type="molecule type" value="Genomic_DNA"/>
</dbReference>
<dbReference type="EMBL" id="DP000009">
    <property type="protein sequence ID" value="ABF96355.1"/>
    <property type="molecule type" value="Genomic_DNA"/>
</dbReference>
<dbReference type="EMBL" id="AP008209">
    <property type="protein sequence ID" value="BAF12188.1"/>
    <property type="molecule type" value="Genomic_DNA"/>
</dbReference>
<dbReference type="EMBL" id="AP014959">
    <property type="protein sequence ID" value="BAS84514.1"/>
    <property type="molecule type" value="Genomic_DNA"/>
</dbReference>
<dbReference type="EMBL" id="CM000140">
    <property type="protein sequence ID" value="EEE59181.1"/>
    <property type="molecule type" value="Genomic_DNA"/>
</dbReference>
<dbReference type="EMBL" id="AK060856">
    <property type="protein sequence ID" value="BAG87576.1"/>
    <property type="molecule type" value="mRNA"/>
</dbReference>
<dbReference type="EMBL" id="AK068899">
    <property type="protein sequence ID" value="BAG91148.1"/>
    <property type="molecule type" value="mRNA"/>
</dbReference>
<dbReference type="RefSeq" id="XP_015633075.1">
    <property type="nucleotide sequence ID" value="XM_015777589.1"/>
</dbReference>
<dbReference type="SMR" id="Q75LR7"/>
<dbReference type="FunCoup" id="Q75LR7">
    <property type="interactions" value="531"/>
</dbReference>
<dbReference type="STRING" id="39947.Q75LR7"/>
<dbReference type="PaxDb" id="39947-Q75LR7"/>
<dbReference type="EnsemblPlants" id="Os03t0390200-01">
    <property type="protein sequence ID" value="Os03t0390200-01"/>
    <property type="gene ID" value="Os03g0390200"/>
</dbReference>
<dbReference type="EnsemblPlants" id="Os03t0390200-02">
    <property type="protein sequence ID" value="Os03t0390200-02"/>
    <property type="gene ID" value="Os03g0390200"/>
</dbReference>
<dbReference type="Gramene" id="Os03t0390200-01">
    <property type="protein sequence ID" value="Os03t0390200-01"/>
    <property type="gene ID" value="Os03g0390200"/>
</dbReference>
<dbReference type="Gramene" id="Os03t0390200-02">
    <property type="protein sequence ID" value="Os03t0390200-02"/>
    <property type="gene ID" value="Os03g0390200"/>
</dbReference>
<dbReference type="KEGG" id="dosa:Os03g0390200"/>
<dbReference type="eggNOG" id="KOG0583">
    <property type="taxonomic scope" value="Eukaryota"/>
</dbReference>
<dbReference type="HOGENOM" id="CLU_000288_63_0_1"/>
<dbReference type="InParanoid" id="Q75LR7"/>
<dbReference type="OMA" id="KPGDAMK"/>
<dbReference type="OrthoDB" id="193931at2759"/>
<dbReference type="Proteomes" id="UP000000763">
    <property type="component" value="Chromosome 3"/>
</dbReference>
<dbReference type="Proteomes" id="UP000007752">
    <property type="component" value="Chromosome 3"/>
</dbReference>
<dbReference type="Proteomes" id="UP000059680">
    <property type="component" value="Chromosome 3"/>
</dbReference>
<dbReference type="GO" id="GO:0005524">
    <property type="term" value="F:ATP binding"/>
    <property type="evidence" value="ECO:0007669"/>
    <property type="project" value="UniProtKB-KW"/>
</dbReference>
<dbReference type="GO" id="GO:0106310">
    <property type="term" value="F:protein serine kinase activity"/>
    <property type="evidence" value="ECO:0007669"/>
    <property type="project" value="RHEA"/>
</dbReference>
<dbReference type="GO" id="GO:0004674">
    <property type="term" value="F:protein serine/threonine kinase activity"/>
    <property type="evidence" value="ECO:0000318"/>
    <property type="project" value="GO_Central"/>
</dbReference>
<dbReference type="GO" id="GO:0009738">
    <property type="term" value="P:abscisic acid-activated signaling pathway"/>
    <property type="evidence" value="ECO:0007669"/>
    <property type="project" value="UniProtKB-KW"/>
</dbReference>
<dbReference type="CDD" id="cd14662">
    <property type="entry name" value="STKc_SnRK2"/>
    <property type="match status" value="1"/>
</dbReference>
<dbReference type="FunFam" id="3.30.200.20:FF:000237">
    <property type="entry name" value="Serine/threonine-protein kinase SAPK2"/>
    <property type="match status" value="1"/>
</dbReference>
<dbReference type="FunFam" id="1.10.510.10:FF:000085">
    <property type="entry name" value="Serine/threonine-protein kinase SRK2E"/>
    <property type="match status" value="1"/>
</dbReference>
<dbReference type="Gene3D" id="3.30.200.20">
    <property type="entry name" value="Phosphorylase Kinase, domain 1"/>
    <property type="match status" value="1"/>
</dbReference>
<dbReference type="Gene3D" id="1.10.510.10">
    <property type="entry name" value="Transferase(Phosphotransferase) domain 1"/>
    <property type="match status" value="1"/>
</dbReference>
<dbReference type="InterPro" id="IPR011009">
    <property type="entry name" value="Kinase-like_dom_sf"/>
</dbReference>
<dbReference type="InterPro" id="IPR000719">
    <property type="entry name" value="Prot_kinase_dom"/>
</dbReference>
<dbReference type="InterPro" id="IPR017441">
    <property type="entry name" value="Protein_kinase_ATP_BS"/>
</dbReference>
<dbReference type="InterPro" id="IPR008271">
    <property type="entry name" value="Ser/Thr_kinase_AS"/>
</dbReference>
<dbReference type="PANTHER" id="PTHR24343">
    <property type="entry name" value="SERINE/THREONINE KINASE"/>
    <property type="match status" value="1"/>
</dbReference>
<dbReference type="PANTHER" id="PTHR24343:SF476">
    <property type="entry name" value="SERINE_THREONINE-PROTEIN KINASE SRK2C"/>
    <property type="match status" value="1"/>
</dbReference>
<dbReference type="Pfam" id="PF00069">
    <property type="entry name" value="Pkinase"/>
    <property type="match status" value="1"/>
</dbReference>
<dbReference type="SMART" id="SM00220">
    <property type="entry name" value="S_TKc"/>
    <property type="match status" value="1"/>
</dbReference>
<dbReference type="SUPFAM" id="SSF56112">
    <property type="entry name" value="Protein kinase-like (PK-like)"/>
    <property type="match status" value="1"/>
</dbReference>
<dbReference type="PROSITE" id="PS00107">
    <property type="entry name" value="PROTEIN_KINASE_ATP"/>
    <property type="match status" value="1"/>
</dbReference>
<dbReference type="PROSITE" id="PS50011">
    <property type="entry name" value="PROTEIN_KINASE_DOM"/>
    <property type="match status" value="1"/>
</dbReference>
<dbReference type="PROSITE" id="PS00108">
    <property type="entry name" value="PROTEIN_KINASE_ST"/>
    <property type="match status" value="1"/>
</dbReference>
<organism>
    <name type="scientific">Oryza sativa subsp. japonica</name>
    <name type="common">Rice</name>
    <dbReference type="NCBI Taxonomy" id="39947"/>
    <lineage>
        <taxon>Eukaryota</taxon>
        <taxon>Viridiplantae</taxon>
        <taxon>Streptophyta</taxon>
        <taxon>Embryophyta</taxon>
        <taxon>Tracheophyta</taxon>
        <taxon>Spermatophyta</taxon>
        <taxon>Magnoliopsida</taxon>
        <taxon>Liliopsida</taxon>
        <taxon>Poales</taxon>
        <taxon>Poaceae</taxon>
        <taxon>BOP clade</taxon>
        <taxon>Oryzoideae</taxon>
        <taxon>Oryzeae</taxon>
        <taxon>Oryzinae</taxon>
        <taxon>Oryza</taxon>
        <taxon>Oryza sativa</taxon>
    </lineage>
</organism>
<proteinExistence type="evidence at protein level"/>
<protein>
    <recommendedName>
        <fullName>Serine/threonine-protein kinase SAPK1</fullName>
        <ecNumber>2.7.11.1</ecNumber>
    </recommendedName>
    <alternativeName>
        <fullName>Osmotic stress/abscisic acid-activated protein kinase 1</fullName>
    </alternativeName>
    <alternativeName>
        <fullName evidence="4">stress-activated protein kinase 1</fullName>
        <shortName evidence="4">OsSAPK1</shortName>
    </alternativeName>
</protein>
<gene>
    <name type="primary">SAPK1</name>
    <name type="ordered locus">Os03g0390200</name>
    <name type="ordered locus">LOC_Os03g27280</name>
    <name type="ORF">OOSJNBa0017N12.8</name>
    <name evidence="5" type="ORF">OsJ_11114</name>
</gene>
<keyword id="KW-0938">Abscisic acid signaling pathway</keyword>
<keyword id="KW-0067">ATP-binding</keyword>
<keyword id="KW-0418">Kinase</keyword>
<keyword id="KW-0547">Nucleotide-binding</keyword>
<keyword id="KW-0597">Phosphoprotein</keyword>
<keyword id="KW-1185">Reference proteome</keyword>
<keyword id="KW-0723">Serine/threonine-protein kinase</keyword>
<keyword id="KW-0346">Stress response</keyword>
<keyword id="KW-0808">Transferase</keyword>
<sequence length="342" mass="38698">MERYEVMRDIGSGNFGVAKLVRDVATNHLFAVKFIERGLKIDEHVQREIMNHRSLKHPNIIRFKEVVLTPTHLAIVMEYAAGGELFERICNAGRFSEDEARFFFQQLISGVSYCHSMQVCHRDLKLENTLLDGSVTPRLKICDFGYSKSSVLHSQPKSTVGTPAYIAPEVLSRKEYDGKVADVWSCGVTLYVMLVGAYPFEDPDDPRNFRKTITRILSVQYSIPDYVRVSADCRHLLSRIFVGNPEQRITIPEIKNHPWFLKNLPIEMTDEYQRSMQLADMNTPSQSLEEVMAIIQEARKPGDAMKLAGAGQVACLGSMDLDDIDDIDDIDIENSGDFVCAL</sequence>
<feature type="chain" id="PRO_0000086628" description="Serine/threonine-protein kinase SAPK1">
    <location>
        <begin position="1"/>
        <end position="342"/>
    </location>
</feature>
<feature type="domain" description="Protein kinase" evidence="1">
    <location>
        <begin position="4"/>
        <end position="260"/>
    </location>
</feature>
<feature type="region of interest" description="C-terminal">
    <location>
        <begin position="253"/>
        <end position="342"/>
    </location>
</feature>
<feature type="active site" description="Proton acceptor" evidence="1 2">
    <location>
        <position position="123"/>
    </location>
</feature>
<feature type="binding site" evidence="1">
    <location>
        <begin position="10"/>
        <end position="18"/>
    </location>
    <ligand>
        <name>ATP</name>
        <dbReference type="ChEBI" id="CHEBI:30616"/>
    </ligand>
</feature>
<feature type="binding site" evidence="1">
    <location>
        <position position="33"/>
    </location>
    <ligand>
        <name>ATP</name>
        <dbReference type="ChEBI" id="CHEBI:30616"/>
    </ligand>
</feature>
<feature type="mutagenesis site" description="Loss of kinase activity, and activation by hyperosmotic stress." evidence="3">
    <original>S</original>
    <variation>D</variation>
    <location>
        <position position="158"/>
    </location>
</feature>
<feature type="mutagenesis site" description="Loss of kinase activity, and activation by hyperosmotic stress." evidence="3">
    <original>T</original>
    <variation>D</variation>
    <location>
        <position position="159"/>
    </location>
</feature>
<feature type="mutagenesis site" description="Loss of kinase activity, and activation by hyperosmotic stress." evidence="3">
    <original>T</original>
    <variation>D</variation>
    <location>
        <position position="162"/>
    </location>
</feature>